<feature type="chain" id="PRO_0000182695" description="Gas vesicle protein K1">
    <location>
        <begin position="1"/>
        <end position="113"/>
    </location>
</feature>
<feature type="region of interest" description="Disordered" evidence="1">
    <location>
        <begin position="90"/>
        <end position="113"/>
    </location>
</feature>
<feature type="compositionally biased region" description="Basic and acidic residues" evidence="1">
    <location>
        <begin position="90"/>
        <end position="100"/>
    </location>
</feature>
<comment type="function">
    <text evidence="7 14">Proteins GvpF to GvpM might be involved in nucleating gas vesicle formation (Probable) (PubMed:33281806). Gas vesicles are hollow, gas filled proteinaceous nanostructures found in several microbial planktonic microorganisms. They allow positioning of halobacteria at the optimal depth for growth in the poorly aerated, shallow brine pools of their habitat (PubMed:33711860).</text>
</comment>
<comment type="function">
    <text evidence="2 3 4 9 10">Expression of a 9.5 kb p-vac DNA fragment containing 2 divergently transcribed regions (gvpD-gvpE-gvpF-gvpG-gvpH-gvpI-gvpJ-gvpK-gvpL-gvpM and gvpA-gvpC-gvpN-gvpO) allows H.volcanii to produce gas vesicles (PubMed:10894744, PubMed:1404376, PubMed:7651141). A minimal gas vesicle can be made in H.volcanii by gvpA1-gvpO1 plus gvpF1-gvpG1-gvpJ1-gvpK1-gvpL1-gvpM1; lack of enough GvpJ1 prevents formation (PubMed:10894744). A similar region restores gas vesicle production in H.halobium without the p-vac locus, but it still has the c-vac locus (PubMed:1398080, PubMed:8002589).</text>
</comment>
<comment type="subunit">
    <text evidence="6 8">GvpF to GvpM interact with each other in vitro, and may form multi-subunit complex(es).</text>
</comment>
<comment type="subcellular location">
    <subcellularLocation>
        <location evidence="13">Gas vesicle</location>
    </subcellularLocation>
</comment>
<comment type="induction">
    <text evidence="5 7 9">Probably part of a gvpF1-gvpG1-gvpH1-gvpI1-gvpJ1-gvpK1-gvpL1-gvpM1 operon, maximally expressed in early to mid log phase (PubMed:1956294, PubMed:7651141). Detected at low levels in growing cells, at higher levels in stationary phase (at protein level). Not detected in isolated gas vesicles (PubMed:7651141). Gas vesicles appear earlier when grown in static culture, possibly due to O(2)-limitation (PubMed:33711860).</text>
</comment>
<comment type="disruption phenotype">
    <text evidence="2 10">A single deletion produces no gas vesicles.</text>
</comment>
<comment type="miscellaneous">
    <text evidence="4 5 7">Encoded in a 14-gene plasmid locus called p-vac which produces predominantly short, spindle-shaped gas vesicles during all stages of growth.</text>
</comment>
<comment type="similarity">
    <text evidence="13">Belongs to the gas vesicle GvpK family.</text>
</comment>
<sequence length="113" mass="12695">MELALDDDADDLQGGLTALVVTVVELLVEALEQEAVRRMESGSLSEDEIERLGRQLQALEDELERLKQQEDINAEVSEFREDLDHVIRDAIEQLSEHETPSGHGSPESQRDDV</sequence>
<protein>
    <recommendedName>
        <fullName>Gas vesicle protein K1</fullName>
        <shortName>GvpK1</shortName>
    </recommendedName>
    <alternativeName>
        <fullName evidence="12">p-GvpK</fullName>
    </alternativeName>
</protein>
<reference evidence="15" key="1">
    <citation type="journal article" date="1991" name="Gene">
        <title>Structure and organization of the gas vesicle gene cluster on the Halobacterium halobium plasmid pNRC100.</title>
        <authorList>
            <person name="Jones J.G."/>
            <person name="Young D.C."/>
            <person name="Dassarma S."/>
        </authorList>
    </citation>
    <scope>NUCLEOTIDE SEQUENCE [GENOMIC DNA]</scope>
    <source>
        <strain>ATCC 700922 / JCM 11081 / NRC-1</strain>
        <plasmid>pNRC100</plasmid>
    </source>
</reference>
<reference evidence="17" key="2">
    <citation type="journal article" date="1991" name="Mol. Microbiol.">
        <title>A DNA region of 9 kbp contains all genes necessary for gas vesicle synthesis in halophilic archaebacteria.</title>
        <authorList>
            <person name="Horne M."/>
            <person name="Englert C."/>
            <person name="Wimmer C."/>
            <person name="Pfeifer F."/>
        </authorList>
    </citation>
    <scope>NUCLEOTIDE SEQUENCE [GENOMIC DNA]</scope>
    <scope>INDUCTION</scope>
    <source>
        <strain>NRC-817</strain>
        <plasmid>pHH1</plasmid>
    </source>
</reference>
<reference key="3">
    <citation type="journal article" date="1998" name="Genome Res.">
        <title>Snapshot of a large dynamic replicon in a halophilic archaeon: megaplasmid or minichromosome?</title>
        <authorList>
            <person name="Ng W.V."/>
            <person name="Ciufo S.A."/>
            <person name="Smith T.M."/>
            <person name="Bumgarner R.E."/>
            <person name="Baskin D."/>
            <person name="Faust J."/>
            <person name="Hall B."/>
            <person name="Loretz C."/>
            <person name="Seto J."/>
            <person name="Slagel J."/>
            <person name="Hood L."/>
            <person name="DasSarma S."/>
        </authorList>
    </citation>
    <scope>NUCLEOTIDE SEQUENCE [LARGE SCALE GENOMIC DNA]</scope>
    <source>
        <strain>ATCC 700922 / JCM 11081 / NRC-1</strain>
        <plasmid>pNRC100</plasmid>
    </source>
</reference>
<reference evidence="16" key="4">
    <citation type="journal article" date="2000" name="Proc. Natl. Acad. Sci. U.S.A.">
        <title>Genome sequence of Halobacterium species NRC-1.</title>
        <authorList>
            <person name="Ng W.V."/>
            <person name="Kennedy S.P."/>
            <person name="Mahairas G.G."/>
            <person name="Berquist B."/>
            <person name="Pan M."/>
            <person name="Shukla H.D."/>
            <person name="Lasky S.R."/>
            <person name="Baliga N.S."/>
            <person name="Thorsson V."/>
            <person name="Sbrogna J."/>
            <person name="Swartzell S."/>
            <person name="Weir D."/>
            <person name="Hall J."/>
            <person name="Dahl T.A."/>
            <person name="Welti R."/>
            <person name="Goo Y.A."/>
            <person name="Leithauser B."/>
            <person name="Keller K."/>
            <person name="Cruz R."/>
            <person name="Danson M.J."/>
            <person name="Hough D.W."/>
            <person name="Maddocks D.G."/>
            <person name="Jablonski P.E."/>
            <person name="Krebs M.P."/>
            <person name="Angevine C.M."/>
            <person name="Dale H."/>
            <person name="Isenbarger T.A."/>
            <person name="Peck R.F."/>
            <person name="Pohlschroder M."/>
            <person name="Spudich J.L."/>
            <person name="Jung K.-H."/>
            <person name="Alam M."/>
            <person name="Freitas T."/>
            <person name="Hou S."/>
            <person name="Daniels C.J."/>
            <person name="Dennis P.P."/>
            <person name="Omer A.D."/>
            <person name="Ebhardt H."/>
            <person name="Lowe T.M."/>
            <person name="Liang P."/>
            <person name="Riley M."/>
            <person name="Hood L."/>
            <person name="DasSarma S."/>
        </authorList>
    </citation>
    <scope>NUCLEOTIDE SEQUENCE [LARGE SCALE GENOMIC DNA]</scope>
    <source>
        <strain>ATCC 700922 / JCM 11081 / NRC-1</strain>
        <plasmid>pNRC200</plasmid>
    </source>
</reference>
<reference key="5">
    <citation type="journal article" date="1992" name="Gene">
        <title>Genetic transformation of a halophilic archaebacterium with a gas vesicle gene cluster restores its ability to float.</title>
        <authorList>
            <person name="Halladay J.T."/>
            <person name="Ng W.L."/>
            <person name="DasSarma S."/>
        </authorList>
    </citation>
    <scope>FUNCTION</scope>
    <scope>GAS VESICLE PRODUCTION</scope>
    <source>
        <strain>ATCC 700922 / JCM 11081 / NRC-1</strain>
        <plasmid>pNRC100</plasmid>
    </source>
</reference>
<reference key="6">
    <citation type="journal article" date="1992" name="J. Mol. Biol.">
        <title>Three different but related gene clusters encoding gas vesicles in halophilic archaea.</title>
        <authorList>
            <person name="Englert C."/>
            <person name="Krueger K."/>
            <person name="Offner S."/>
            <person name="Pfeifer F."/>
        </authorList>
    </citation>
    <scope>GAS VESICLE GENE CLUSTER</scope>
    <source>
        <strain>NRC-817</strain>
        <plasmid>pHH1</plasmid>
    </source>
</reference>
<reference key="7">
    <citation type="journal article" date="1994" name="J. Bacteriol.">
        <title>Wild-type gas vesicle formation requires at least ten genes in the gvp gene cluster of Halobacterium halobium plasmid pNRC100.</title>
        <authorList>
            <person name="DasSarma S."/>
            <person name="Arora P."/>
            <person name="Lin F."/>
            <person name="Molinari E."/>
            <person name="Yin L.R."/>
        </authorList>
    </citation>
    <scope>DISRUPTION PHENOTYPE</scope>
    <source>
        <strain>ATCC 700922 / JCM 11081 / NRC-1</strain>
        <plasmid>pNRC100</plasmid>
    </source>
</reference>
<reference key="8">
    <citation type="journal article" date="1995" name="Mol. Microbiol.">
        <title>Complementation studies with the gas vesicle-encoding p-vac region of Halobacterium salinarium PHH1 reveal a regulatory role for the p-gvpDE genes.</title>
        <authorList>
            <person name="Offner S."/>
            <person name="Pfeifer F."/>
        </authorList>
    </citation>
    <scope>FUNCTION</scope>
    <scope>INDUCTION</scope>
    <source>
        <strain>PHH1</strain>
    </source>
</reference>
<reference key="9">
    <citation type="journal article" date="1997" name="Microbiology">
        <title>Growth competition between Halobacterium salinarium strain PHH1 and mutants affected in gas vesicle synthesis.</title>
        <authorList>
            <person name="Beard S.J."/>
            <person name="Hayes P.K."/>
            <person name="Walsby A.E."/>
        </authorList>
    </citation>
    <scope>FUNCTION IN BUOYANCY</scope>
    <scope>POSSIBLE INDUCTION BY OXYGEN LIMITATION</scope>
    <source>
        <strain>PHH1</strain>
    </source>
</reference>
<reference key="10">
    <citation type="journal article" date="2000" name="J. Bacteriol.">
        <title>Eight of fourteen gvp genes are sufficient for formation of gas vesicles in halophilic archaea.</title>
        <authorList>
            <person name="Offner S."/>
            <person name="Hofacker A."/>
            <person name="Wanner G."/>
            <person name="Pfeifer F."/>
        </authorList>
    </citation>
    <scope>DISRUPTION PHENOTYPE</scope>
    <source>
        <strain>PHH1</strain>
        <plasmid>pHH1</plasmid>
    </source>
</reference>
<reference key="11">
    <citation type="journal article" date="2020" name="Front. Microbiol.">
        <title>Accessory Gvp Proteins Form a Complex During Gas Vesicle Formation of Haloarchaea.</title>
        <authorList>
            <person name="Voelkner K."/>
            <person name="Jost A."/>
            <person name="Pfeifer F."/>
        </authorList>
    </citation>
    <scope>FUNCTION</scope>
    <scope>SUBUNIT</scope>
    <source>
        <strain>PHH1</strain>
        <plasmid>pHH1</plasmid>
    </source>
</reference>
<reference key="12">
    <citation type="journal article" date="2021" name="Front. Microbiol.">
        <title>Effect of Mutations in GvpJ and GvpM on Gas Vesicle Formation of Halobacterium salinarum.</title>
        <authorList>
            <person name="Jost A."/>
            <person name="Knitsch R."/>
            <person name="Voelkner K."/>
            <person name="Pfeifer F."/>
        </authorList>
    </citation>
    <scope>INTERACTION WITH GVPL1</scope>
    <source>
        <strain>PHH1</strain>
        <plasmid>pHH1</plasmid>
    </source>
</reference>
<keyword id="KW-0304">Gas vesicle</keyword>
<keyword id="KW-0614">Plasmid</keyword>
<keyword id="KW-1185">Reference proteome</keyword>
<organism>
    <name type="scientific">Halobacterium salinarum (strain ATCC 700922 / JCM 11081 / NRC-1)</name>
    <name type="common">Halobacterium halobium</name>
    <dbReference type="NCBI Taxonomy" id="64091"/>
    <lineage>
        <taxon>Archaea</taxon>
        <taxon>Methanobacteriati</taxon>
        <taxon>Methanobacteriota</taxon>
        <taxon>Stenosarchaea group</taxon>
        <taxon>Halobacteria</taxon>
        <taxon>Halobacteriales</taxon>
        <taxon>Halobacteriaceae</taxon>
        <taxon>Halobacterium</taxon>
        <taxon>Halobacterium salinarum NRC-34001</taxon>
    </lineage>
</organism>
<evidence type="ECO:0000256" key="1">
    <source>
        <dbReference type="SAM" id="MobiDB-lite"/>
    </source>
</evidence>
<evidence type="ECO:0000269" key="2">
    <source>
    </source>
</evidence>
<evidence type="ECO:0000269" key="3">
    <source>
    </source>
</evidence>
<evidence type="ECO:0000269" key="4">
    <source>
    </source>
</evidence>
<evidence type="ECO:0000269" key="5">
    <source>
    </source>
</evidence>
<evidence type="ECO:0000269" key="6">
    <source>
    </source>
</evidence>
<evidence type="ECO:0000269" key="7">
    <source>
    </source>
</evidence>
<evidence type="ECO:0000269" key="8">
    <source>
    </source>
</evidence>
<evidence type="ECO:0000269" key="9">
    <source>
    </source>
</evidence>
<evidence type="ECO:0000269" key="10">
    <source>
    </source>
</evidence>
<evidence type="ECO:0000303" key="11">
    <source>
    </source>
</evidence>
<evidence type="ECO:0000303" key="12">
    <source>
    </source>
</evidence>
<evidence type="ECO:0000305" key="13"/>
<evidence type="ECO:0000305" key="14">
    <source>
    </source>
</evidence>
<evidence type="ECO:0000312" key="15">
    <source>
        <dbReference type="EMBL" id="AAA98188.1"/>
    </source>
</evidence>
<evidence type="ECO:0000312" key="16">
    <source>
        <dbReference type="EMBL" id="AAG20718.1"/>
    </source>
</evidence>
<evidence type="ECO:0000312" key="17">
    <source>
        <dbReference type="EMBL" id="CAA39178.1"/>
    </source>
</evidence>
<proteinExistence type="evidence at protein level"/>
<dbReference type="EMBL" id="M58557">
    <property type="protein sequence ID" value="AAA98188.1"/>
    <property type="molecule type" value="Genomic_DNA"/>
</dbReference>
<dbReference type="EMBL" id="X55648">
    <property type="protein sequence ID" value="CAA39178.1"/>
    <property type="molecule type" value="Genomic_DNA"/>
</dbReference>
<dbReference type="EMBL" id="AF016485">
    <property type="protein sequence ID" value="AAC82801.1"/>
    <property type="molecule type" value="Genomic_DNA"/>
</dbReference>
<dbReference type="EMBL" id="AE004438">
    <property type="protein sequence ID" value="AAG20718.1"/>
    <property type="molecule type" value="Genomic_DNA"/>
</dbReference>
<dbReference type="PIR" id="T08234">
    <property type="entry name" value="T08234"/>
</dbReference>
<dbReference type="RefSeq" id="WP_010890527.1">
    <property type="nucleotide sequence ID" value="NC_001869.1"/>
</dbReference>
<dbReference type="SMR" id="P24375"/>
<dbReference type="DNASU" id="1449265"/>
<dbReference type="GeneID" id="5954626"/>
<dbReference type="KEGG" id="hal:gvpK"/>
<dbReference type="KEGG" id="hal:VNG_6021G"/>
<dbReference type="PATRIC" id="fig|64091.14.peg.2092"/>
<dbReference type="HOGENOM" id="CLU_155015_1_0_2"/>
<dbReference type="InParanoid" id="P24375"/>
<dbReference type="OrthoDB" id="275652at2157"/>
<dbReference type="Proteomes" id="UP000000554">
    <property type="component" value="Plasmid pNRC100"/>
</dbReference>
<dbReference type="Proteomes" id="UP000000554">
    <property type="component" value="Plasmid pNRC200"/>
</dbReference>
<dbReference type="GO" id="GO:0031411">
    <property type="term" value="C:gas vesicle"/>
    <property type="evidence" value="ECO:0007669"/>
    <property type="project" value="UniProtKB-SubCell"/>
</dbReference>
<dbReference type="GO" id="GO:0031412">
    <property type="term" value="P:gas vesicle organization"/>
    <property type="evidence" value="ECO:0007669"/>
    <property type="project" value="InterPro"/>
</dbReference>
<dbReference type="InterPro" id="IPR007805">
    <property type="entry name" value="GvpK"/>
</dbReference>
<dbReference type="PANTHER" id="PTHR40137">
    <property type="entry name" value="PROTEIN GVPK 1"/>
    <property type="match status" value="1"/>
</dbReference>
<dbReference type="PANTHER" id="PTHR40137:SF2">
    <property type="entry name" value="PROTEIN GVPK 1"/>
    <property type="match status" value="1"/>
</dbReference>
<dbReference type="Pfam" id="PF05121">
    <property type="entry name" value="GvpK"/>
    <property type="match status" value="1"/>
</dbReference>
<name>GVPK1_HALSA</name>
<accession>P24375</accession>
<accession>Q9HI26</accession>
<geneLocation type="plasmid">
    <name>pNRC100</name>
</geneLocation>
<geneLocation type="plasmid">
    <name>pNRC200</name>
</geneLocation>
<geneLocation type="plasmid">
    <name>pHH1</name>
</geneLocation>
<gene>
    <name type="primary">gvpK11</name>
    <name evidence="11" type="synonym">gvpK</name>
    <name evidence="12" type="synonym">p-gvpK</name>
    <name type="ordered locus">VNG_5021G</name>
</gene>
<gene>
    <name evidence="16" type="primary">gvpK1</name>
    <name evidence="16" type="ordered locus">VNG_6021G</name>
</gene>